<protein>
    <recommendedName>
        <fullName evidence="1">Isoleucine--tRNA ligase</fullName>
        <ecNumber evidence="1">6.1.1.5</ecNumber>
    </recommendedName>
    <alternativeName>
        <fullName evidence="1">Isoleucyl-tRNA synthetase</fullName>
        <shortName evidence="1">IleRS</shortName>
    </alternativeName>
</protein>
<name>SYI_BORPA</name>
<organism>
    <name type="scientific">Bordetella parapertussis (strain 12822 / ATCC BAA-587 / NCTC 13253)</name>
    <dbReference type="NCBI Taxonomy" id="257311"/>
    <lineage>
        <taxon>Bacteria</taxon>
        <taxon>Pseudomonadati</taxon>
        <taxon>Pseudomonadota</taxon>
        <taxon>Betaproteobacteria</taxon>
        <taxon>Burkholderiales</taxon>
        <taxon>Alcaligenaceae</taxon>
        <taxon>Bordetella</taxon>
    </lineage>
</organism>
<sequence length="953" mass="105561">MDYKKSLNLPDTPFPMRGDLAKREPGWVAEWEETQVYQAIRAASRGRPRFVLHDGPPYANGDIHIGHAVNKILKDIIVKSRNMAGYDAHYVPGWDCHGMPIEIQIEKKYGKHLPVTEVQSKARAYALEQIDRQRKDFKRLGVLGDWHNPYLTMNFSNEADEIRVLGRILEKGYVFRGLKPVNWCFDCGSALAEAEVEYADRVDPAIDVAFPFTDRGALARAFGLDEVDAGAIVIWTTTPWTIPSNQALNVHPEIDYALVRVTPTPVHGPLLLLAQERVEPSLKAWGLEGEIIATAKGEALEGLRFRHPLAAAAQGYDRTSPIYLGDYVTLDTGTGVVHSAPAYGIEDFVSCKAHGLADSDILGPVMGDGKFVDSLPLFGGLSIWDANPRIVEALKLAGSLMLVQKLSHSYMHCWRHKTPVIYRATSQWFAGMDVKPRDGGPSLRESALAGIDATAFYPAWGRARLHAMIANRPDWTLSRQRQWGVPMAFFVHKETGELHPRTVELLEQVAQRVEKGGIEAWQSLDPRELLGDEAELYEKNRDTLDVWFDSGSTHATVLGGKDGVLGSSHGAELAWPADLYLEGSDQHRGWFHSSLLTGCMLYGHPPYKGLLTHGFVVDGQGRKMSKSVGNVIAPQKVSDSLGAEILRLWVASTDYSGELSISDEILKRVVESYRRIRNTLRFLLANVADFDAVGQAVPYGELFEIDRYALAMTAQMQAEVQGHYERYDFHPAVSRLQTFCSEDLGAFYLDILKDRLYTTAAGSAARRSAQTALLDITQTLLKLMAPILSFTAEEAWKVLAGSALAKQADAPRVTIFTEVYHALPPFADGEALTAKWTRLRAIRAEVQRKLEEVRSAGAIGSSLQAEVDLYANAADHDILASLGDDLRFVLIVSRATVHADADDLRIEIAASGHKKCERCWHWRPDVGQDADHPEICGRCVSNLFGAGEPRTRA</sequence>
<dbReference type="EC" id="6.1.1.5" evidence="1"/>
<dbReference type="EMBL" id="BX640429">
    <property type="protein sequence ID" value="CAE37284.1"/>
    <property type="molecule type" value="Genomic_DNA"/>
</dbReference>
<dbReference type="RefSeq" id="WP_010928306.1">
    <property type="nucleotide sequence ID" value="NC_002928.3"/>
</dbReference>
<dbReference type="SMR" id="Q7W8Z2"/>
<dbReference type="GeneID" id="93203757"/>
<dbReference type="KEGG" id="bpa:BPP1984"/>
<dbReference type="HOGENOM" id="CLU_001493_7_1_4"/>
<dbReference type="Proteomes" id="UP000001421">
    <property type="component" value="Chromosome"/>
</dbReference>
<dbReference type="GO" id="GO:0005829">
    <property type="term" value="C:cytosol"/>
    <property type="evidence" value="ECO:0007669"/>
    <property type="project" value="TreeGrafter"/>
</dbReference>
<dbReference type="GO" id="GO:0002161">
    <property type="term" value="F:aminoacyl-tRNA deacylase activity"/>
    <property type="evidence" value="ECO:0007669"/>
    <property type="project" value="InterPro"/>
</dbReference>
<dbReference type="GO" id="GO:0005524">
    <property type="term" value="F:ATP binding"/>
    <property type="evidence" value="ECO:0007669"/>
    <property type="project" value="UniProtKB-UniRule"/>
</dbReference>
<dbReference type="GO" id="GO:0004822">
    <property type="term" value="F:isoleucine-tRNA ligase activity"/>
    <property type="evidence" value="ECO:0007669"/>
    <property type="project" value="UniProtKB-UniRule"/>
</dbReference>
<dbReference type="GO" id="GO:0000049">
    <property type="term" value="F:tRNA binding"/>
    <property type="evidence" value="ECO:0007669"/>
    <property type="project" value="InterPro"/>
</dbReference>
<dbReference type="GO" id="GO:0008270">
    <property type="term" value="F:zinc ion binding"/>
    <property type="evidence" value="ECO:0007669"/>
    <property type="project" value="UniProtKB-UniRule"/>
</dbReference>
<dbReference type="GO" id="GO:0006428">
    <property type="term" value="P:isoleucyl-tRNA aminoacylation"/>
    <property type="evidence" value="ECO:0007669"/>
    <property type="project" value="UniProtKB-UniRule"/>
</dbReference>
<dbReference type="CDD" id="cd07960">
    <property type="entry name" value="Anticodon_Ia_Ile_BEm"/>
    <property type="match status" value="1"/>
</dbReference>
<dbReference type="CDD" id="cd00818">
    <property type="entry name" value="IleRS_core"/>
    <property type="match status" value="1"/>
</dbReference>
<dbReference type="FunFam" id="3.40.50.620:FF:000042">
    <property type="entry name" value="Isoleucine--tRNA ligase"/>
    <property type="match status" value="1"/>
</dbReference>
<dbReference type="FunFam" id="3.40.50.620:FF:000048">
    <property type="entry name" value="Isoleucine--tRNA ligase"/>
    <property type="match status" value="1"/>
</dbReference>
<dbReference type="Gene3D" id="1.10.730.20">
    <property type="match status" value="1"/>
</dbReference>
<dbReference type="Gene3D" id="3.40.50.620">
    <property type="entry name" value="HUPs"/>
    <property type="match status" value="2"/>
</dbReference>
<dbReference type="Gene3D" id="3.90.740.10">
    <property type="entry name" value="Valyl/Leucyl/Isoleucyl-tRNA synthetase, editing domain"/>
    <property type="match status" value="1"/>
</dbReference>
<dbReference type="HAMAP" id="MF_02002">
    <property type="entry name" value="Ile_tRNA_synth_type1"/>
    <property type="match status" value="1"/>
</dbReference>
<dbReference type="InterPro" id="IPR001412">
    <property type="entry name" value="aa-tRNA-synth_I_CS"/>
</dbReference>
<dbReference type="InterPro" id="IPR002300">
    <property type="entry name" value="aa-tRNA-synth_Ia"/>
</dbReference>
<dbReference type="InterPro" id="IPR033708">
    <property type="entry name" value="Anticodon_Ile_BEm"/>
</dbReference>
<dbReference type="InterPro" id="IPR002301">
    <property type="entry name" value="Ile-tRNA-ligase"/>
</dbReference>
<dbReference type="InterPro" id="IPR023585">
    <property type="entry name" value="Ile-tRNA-ligase_type1"/>
</dbReference>
<dbReference type="InterPro" id="IPR050081">
    <property type="entry name" value="Ile-tRNA_ligase"/>
</dbReference>
<dbReference type="InterPro" id="IPR013155">
    <property type="entry name" value="M/V/L/I-tRNA-synth_anticd-bd"/>
</dbReference>
<dbReference type="InterPro" id="IPR014729">
    <property type="entry name" value="Rossmann-like_a/b/a_fold"/>
</dbReference>
<dbReference type="InterPro" id="IPR009080">
    <property type="entry name" value="tRNAsynth_Ia_anticodon-bd"/>
</dbReference>
<dbReference type="InterPro" id="IPR009008">
    <property type="entry name" value="Val/Leu/Ile-tRNA-synth_edit"/>
</dbReference>
<dbReference type="InterPro" id="IPR010663">
    <property type="entry name" value="Znf_FPG/IleRS"/>
</dbReference>
<dbReference type="NCBIfam" id="TIGR00392">
    <property type="entry name" value="ileS"/>
    <property type="match status" value="1"/>
</dbReference>
<dbReference type="PANTHER" id="PTHR42765:SF1">
    <property type="entry name" value="ISOLEUCINE--TRNA LIGASE, MITOCHONDRIAL"/>
    <property type="match status" value="1"/>
</dbReference>
<dbReference type="PANTHER" id="PTHR42765">
    <property type="entry name" value="SOLEUCYL-TRNA SYNTHETASE"/>
    <property type="match status" value="1"/>
</dbReference>
<dbReference type="Pfam" id="PF08264">
    <property type="entry name" value="Anticodon_1"/>
    <property type="match status" value="1"/>
</dbReference>
<dbReference type="Pfam" id="PF00133">
    <property type="entry name" value="tRNA-synt_1"/>
    <property type="match status" value="1"/>
</dbReference>
<dbReference type="Pfam" id="PF06827">
    <property type="entry name" value="zf-FPG_IleRS"/>
    <property type="match status" value="1"/>
</dbReference>
<dbReference type="PRINTS" id="PR00984">
    <property type="entry name" value="TRNASYNTHILE"/>
</dbReference>
<dbReference type="SUPFAM" id="SSF47323">
    <property type="entry name" value="Anticodon-binding domain of a subclass of class I aminoacyl-tRNA synthetases"/>
    <property type="match status" value="1"/>
</dbReference>
<dbReference type="SUPFAM" id="SSF52374">
    <property type="entry name" value="Nucleotidylyl transferase"/>
    <property type="match status" value="1"/>
</dbReference>
<dbReference type="SUPFAM" id="SSF50677">
    <property type="entry name" value="ValRS/IleRS/LeuRS editing domain"/>
    <property type="match status" value="1"/>
</dbReference>
<dbReference type="PROSITE" id="PS00178">
    <property type="entry name" value="AA_TRNA_LIGASE_I"/>
    <property type="match status" value="1"/>
</dbReference>
<proteinExistence type="inferred from homology"/>
<accession>Q7W8Z2</accession>
<keyword id="KW-0030">Aminoacyl-tRNA synthetase</keyword>
<keyword id="KW-0067">ATP-binding</keyword>
<keyword id="KW-0963">Cytoplasm</keyword>
<keyword id="KW-0436">Ligase</keyword>
<keyword id="KW-0479">Metal-binding</keyword>
<keyword id="KW-0547">Nucleotide-binding</keyword>
<keyword id="KW-0648">Protein biosynthesis</keyword>
<keyword id="KW-0862">Zinc</keyword>
<gene>
    <name evidence="1" type="primary">ileS</name>
    <name type="ordered locus">BPP1984</name>
</gene>
<comment type="function">
    <text evidence="1">Catalyzes the attachment of isoleucine to tRNA(Ile). As IleRS can inadvertently accommodate and process structurally similar amino acids such as valine, to avoid such errors it has two additional distinct tRNA(Ile)-dependent editing activities. One activity is designated as 'pretransfer' editing and involves the hydrolysis of activated Val-AMP. The other activity is designated 'posttransfer' editing and involves deacylation of mischarged Val-tRNA(Ile).</text>
</comment>
<comment type="catalytic activity">
    <reaction evidence="1">
        <text>tRNA(Ile) + L-isoleucine + ATP = L-isoleucyl-tRNA(Ile) + AMP + diphosphate</text>
        <dbReference type="Rhea" id="RHEA:11060"/>
        <dbReference type="Rhea" id="RHEA-COMP:9666"/>
        <dbReference type="Rhea" id="RHEA-COMP:9695"/>
        <dbReference type="ChEBI" id="CHEBI:30616"/>
        <dbReference type="ChEBI" id="CHEBI:33019"/>
        <dbReference type="ChEBI" id="CHEBI:58045"/>
        <dbReference type="ChEBI" id="CHEBI:78442"/>
        <dbReference type="ChEBI" id="CHEBI:78528"/>
        <dbReference type="ChEBI" id="CHEBI:456215"/>
        <dbReference type="EC" id="6.1.1.5"/>
    </reaction>
</comment>
<comment type="cofactor">
    <cofactor evidence="1">
        <name>Zn(2+)</name>
        <dbReference type="ChEBI" id="CHEBI:29105"/>
    </cofactor>
    <text evidence="1">Binds 1 zinc ion per subunit.</text>
</comment>
<comment type="subunit">
    <text evidence="1">Monomer.</text>
</comment>
<comment type="subcellular location">
    <subcellularLocation>
        <location evidence="1">Cytoplasm</location>
    </subcellularLocation>
</comment>
<comment type="domain">
    <text evidence="1">IleRS has two distinct active sites: one for aminoacylation and one for editing. The misactivated valine is translocated from the active site to the editing site, which sterically excludes the correctly activated isoleucine. The single editing site contains two valyl binding pockets, one specific for each substrate (Val-AMP or Val-tRNA(Ile)).</text>
</comment>
<comment type="similarity">
    <text evidence="1">Belongs to the class-I aminoacyl-tRNA synthetase family. IleS type 1 subfamily.</text>
</comment>
<evidence type="ECO:0000255" key="1">
    <source>
        <dbReference type="HAMAP-Rule" id="MF_02002"/>
    </source>
</evidence>
<reference key="1">
    <citation type="journal article" date="2003" name="Nat. Genet.">
        <title>Comparative analysis of the genome sequences of Bordetella pertussis, Bordetella parapertussis and Bordetella bronchiseptica.</title>
        <authorList>
            <person name="Parkhill J."/>
            <person name="Sebaihia M."/>
            <person name="Preston A."/>
            <person name="Murphy L.D."/>
            <person name="Thomson N.R."/>
            <person name="Harris D.E."/>
            <person name="Holden M.T.G."/>
            <person name="Churcher C.M."/>
            <person name="Bentley S.D."/>
            <person name="Mungall K.L."/>
            <person name="Cerdeno-Tarraga A.-M."/>
            <person name="Temple L."/>
            <person name="James K.D."/>
            <person name="Harris B."/>
            <person name="Quail M.A."/>
            <person name="Achtman M."/>
            <person name="Atkin R."/>
            <person name="Baker S."/>
            <person name="Basham D."/>
            <person name="Bason N."/>
            <person name="Cherevach I."/>
            <person name="Chillingworth T."/>
            <person name="Collins M."/>
            <person name="Cronin A."/>
            <person name="Davis P."/>
            <person name="Doggett J."/>
            <person name="Feltwell T."/>
            <person name="Goble A."/>
            <person name="Hamlin N."/>
            <person name="Hauser H."/>
            <person name="Holroyd S."/>
            <person name="Jagels K."/>
            <person name="Leather S."/>
            <person name="Moule S."/>
            <person name="Norberczak H."/>
            <person name="O'Neil S."/>
            <person name="Ormond D."/>
            <person name="Price C."/>
            <person name="Rabbinowitsch E."/>
            <person name="Rutter S."/>
            <person name="Sanders M."/>
            <person name="Saunders D."/>
            <person name="Seeger K."/>
            <person name="Sharp S."/>
            <person name="Simmonds M."/>
            <person name="Skelton J."/>
            <person name="Squares R."/>
            <person name="Squares S."/>
            <person name="Stevens K."/>
            <person name="Unwin L."/>
            <person name="Whitehead S."/>
            <person name="Barrell B.G."/>
            <person name="Maskell D.J."/>
        </authorList>
    </citation>
    <scope>NUCLEOTIDE SEQUENCE [LARGE SCALE GENOMIC DNA]</scope>
    <source>
        <strain>12822 / ATCC BAA-587 / NCTC 13253</strain>
    </source>
</reference>
<feature type="chain" id="PRO_0000098358" description="Isoleucine--tRNA ligase">
    <location>
        <begin position="1"/>
        <end position="953"/>
    </location>
</feature>
<feature type="short sequence motif" description="'HIGH' region">
    <location>
        <begin position="57"/>
        <end position="67"/>
    </location>
</feature>
<feature type="short sequence motif" description="'KMSKS' region">
    <location>
        <begin position="623"/>
        <end position="627"/>
    </location>
</feature>
<feature type="binding site" evidence="1">
    <location>
        <position position="582"/>
    </location>
    <ligand>
        <name>L-isoleucyl-5'-AMP</name>
        <dbReference type="ChEBI" id="CHEBI:178002"/>
    </ligand>
</feature>
<feature type="binding site" evidence="1">
    <location>
        <position position="626"/>
    </location>
    <ligand>
        <name>ATP</name>
        <dbReference type="ChEBI" id="CHEBI:30616"/>
    </ligand>
</feature>
<feature type="binding site" evidence="1">
    <location>
        <position position="916"/>
    </location>
    <ligand>
        <name>Zn(2+)</name>
        <dbReference type="ChEBI" id="CHEBI:29105"/>
    </ligand>
</feature>
<feature type="binding site" evidence="1">
    <location>
        <position position="919"/>
    </location>
    <ligand>
        <name>Zn(2+)</name>
        <dbReference type="ChEBI" id="CHEBI:29105"/>
    </ligand>
</feature>
<feature type="binding site" evidence="1">
    <location>
        <position position="936"/>
    </location>
    <ligand>
        <name>Zn(2+)</name>
        <dbReference type="ChEBI" id="CHEBI:29105"/>
    </ligand>
</feature>
<feature type="binding site" evidence="1">
    <location>
        <position position="939"/>
    </location>
    <ligand>
        <name>Zn(2+)</name>
        <dbReference type="ChEBI" id="CHEBI:29105"/>
    </ligand>
</feature>